<proteinExistence type="inferred from homology"/>
<sequence length="809" mass="93357">MAYEAGKIEKKWQKIWQEKEYFEPKDDFSLPKKYILSMFPYPSGRIHMGHVRNYSIGDAMARYYRKKGFNVLHPIGFDSFGMPAENAAIKHGIHPKKWTYENIDYMQNELASLGFSFSKKRMLATSDPLYTKFEQEFFIKMYEKGLIYTKEAEVNWCENDKTVLANEQVEDGKCWRCGHEVIRKKMPGYYVKITAYADELLQDLKKLEGKWPSQVLTMQENWIGKSTGLSFDFDIEENNKISAKKINVFTTRAETIYGVSYIALAPDHEIVNELIDKKLLDQDVIAKIQNIQNQTPRQRQAAPKEGYFLNLYVIHPLSKEKIPLWVANFVLSDYGSGAVMSVPAHDERDYEFAKTYNLAIKKVIYKDENDAQCYTLKEGVLTSSGEFDQLECNDAREKISLKIESLGIGKKVTNFKIRDWGVSRQRYWGAPIPMIKCDSCGIVPQKIENLPITLPEDVVINGEGNPLDKHETWKECICPKCGKKAQKESDTLDTFFESSWYFARFASDDKTWQEKAVDEKSVNYWMNVDEYIGGIEHAILHLLYARFFQKALRDLGYLKDDEPFNRLLTQGMVTKDGAKMSKSKGNVVDPDYIIEKYGADSARLFILFAAPPAKELEWNDSALEGAFKFINRLYEKAMSLECGKLQEIDHQSLNKEEKYARLKVYEALKKSFEVYEESFAFNTLIAACMEALNALNAINHKEVSKEAFYIILNILEPIIPHVCFELSEYLFKCENFKVLKIKDEVFIKDSFNIAISVNGKKRAQIEINSEAKEDEILALAKENVAKWLEGKTIVKEIYIDKKLVNLVVK</sequence>
<accession>B9KCS8</accession>
<dbReference type="EC" id="6.1.1.4" evidence="1"/>
<dbReference type="EMBL" id="CP000932">
    <property type="protein sequence ID" value="ACM64367.1"/>
    <property type="molecule type" value="Genomic_DNA"/>
</dbReference>
<dbReference type="RefSeq" id="WP_012661750.1">
    <property type="nucleotide sequence ID" value="NC_012039.1"/>
</dbReference>
<dbReference type="SMR" id="B9KCS8"/>
<dbReference type="STRING" id="306263.Cla_1045"/>
<dbReference type="KEGG" id="cla:CLA_1045"/>
<dbReference type="PATRIC" id="fig|306263.5.peg.1029"/>
<dbReference type="eggNOG" id="COG0495">
    <property type="taxonomic scope" value="Bacteria"/>
</dbReference>
<dbReference type="HOGENOM" id="CLU_004427_0_0_7"/>
<dbReference type="Proteomes" id="UP000007727">
    <property type="component" value="Chromosome"/>
</dbReference>
<dbReference type="GO" id="GO:0005829">
    <property type="term" value="C:cytosol"/>
    <property type="evidence" value="ECO:0007669"/>
    <property type="project" value="TreeGrafter"/>
</dbReference>
<dbReference type="GO" id="GO:0002161">
    <property type="term" value="F:aminoacyl-tRNA deacylase activity"/>
    <property type="evidence" value="ECO:0007669"/>
    <property type="project" value="InterPro"/>
</dbReference>
<dbReference type="GO" id="GO:0005524">
    <property type="term" value="F:ATP binding"/>
    <property type="evidence" value="ECO:0007669"/>
    <property type="project" value="UniProtKB-UniRule"/>
</dbReference>
<dbReference type="GO" id="GO:0004823">
    <property type="term" value="F:leucine-tRNA ligase activity"/>
    <property type="evidence" value="ECO:0007669"/>
    <property type="project" value="UniProtKB-UniRule"/>
</dbReference>
<dbReference type="GO" id="GO:0006429">
    <property type="term" value="P:leucyl-tRNA aminoacylation"/>
    <property type="evidence" value="ECO:0007669"/>
    <property type="project" value="UniProtKB-UniRule"/>
</dbReference>
<dbReference type="CDD" id="cd07958">
    <property type="entry name" value="Anticodon_Ia_Leu_BEm"/>
    <property type="match status" value="1"/>
</dbReference>
<dbReference type="CDD" id="cd00812">
    <property type="entry name" value="LeuRS_core"/>
    <property type="match status" value="1"/>
</dbReference>
<dbReference type="FunFam" id="1.10.730.10:FF:000002">
    <property type="entry name" value="Leucine--tRNA ligase"/>
    <property type="match status" value="1"/>
</dbReference>
<dbReference type="Gene3D" id="3.10.20.590">
    <property type="match status" value="1"/>
</dbReference>
<dbReference type="Gene3D" id="3.40.50.620">
    <property type="entry name" value="HUPs"/>
    <property type="match status" value="2"/>
</dbReference>
<dbReference type="Gene3D" id="1.10.730.10">
    <property type="entry name" value="Isoleucyl-tRNA Synthetase, Domain 1"/>
    <property type="match status" value="1"/>
</dbReference>
<dbReference type="HAMAP" id="MF_00049_B">
    <property type="entry name" value="Leu_tRNA_synth_B"/>
    <property type="match status" value="1"/>
</dbReference>
<dbReference type="InterPro" id="IPR001412">
    <property type="entry name" value="aa-tRNA-synth_I_CS"/>
</dbReference>
<dbReference type="InterPro" id="IPR002300">
    <property type="entry name" value="aa-tRNA-synth_Ia"/>
</dbReference>
<dbReference type="InterPro" id="IPR002302">
    <property type="entry name" value="Leu-tRNA-ligase"/>
</dbReference>
<dbReference type="InterPro" id="IPR025709">
    <property type="entry name" value="Leu_tRNA-synth_edit"/>
</dbReference>
<dbReference type="InterPro" id="IPR013155">
    <property type="entry name" value="M/V/L/I-tRNA-synth_anticd-bd"/>
</dbReference>
<dbReference type="InterPro" id="IPR015413">
    <property type="entry name" value="Methionyl/Leucyl_tRNA_Synth"/>
</dbReference>
<dbReference type="InterPro" id="IPR014729">
    <property type="entry name" value="Rossmann-like_a/b/a_fold"/>
</dbReference>
<dbReference type="InterPro" id="IPR009080">
    <property type="entry name" value="tRNAsynth_Ia_anticodon-bd"/>
</dbReference>
<dbReference type="InterPro" id="IPR009008">
    <property type="entry name" value="Val/Leu/Ile-tRNA-synth_edit"/>
</dbReference>
<dbReference type="NCBIfam" id="TIGR00396">
    <property type="entry name" value="leuS_bact"/>
    <property type="match status" value="1"/>
</dbReference>
<dbReference type="PANTHER" id="PTHR43740:SF2">
    <property type="entry name" value="LEUCINE--TRNA LIGASE, MITOCHONDRIAL"/>
    <property type="match status" value="1"/>
</dbReference>
<dbReference type="PANTHER" id="PTHR43740">
    <property type="entry name" value="LEUCYL-TRNA SYNTHETASE"/>
    <property type="match status" value="1"/>
</dbReference>
<dbReference type="Pfam" id="PF08264">
    <property type="entry name" value="Anticodon_1"/>
    <property type="match status" value="1"/>
</dbReference>
<dbReference type="Pfam" id="PF00133">
    <property type="entry name" value="tRNA-synt_1"/>
    <property type="match status" value="1"/>
</dbReference>
<dbReference type="Pfam" id="PF13603">
    <property type="entry name" value="tRNA-synt_1_2"/>
    <property type="match status" value="1"/>
</dbReference>
<dbReference type="Pfam" id="PF09334">
    <property type="entry name" value="tRNA-synt_1g"/>
    <property type="match status" value="1"/>
</dbReference>
<dbReference type="PRINTS" id="PR00985">
    <property type="entry name" value="TRNASYNTHLEU"/>
</dbReference>
<dbReference type="SUPFAM" id="SSF47323">
    <property type="entry name" value="Anticodon-binding domain of a subclass of class I aminoacyl-tRNA synthetases"/>
    <property type="match status" value="1"/>
</dbReference>
<dbReference type="SUPFAM" id="SSF52374">
    <property type="entry name" value="Nucleotidylyl transferase"/>
    <property type="match status" value="1"/>
</dbReference>
<dbReference type="SUPFAM" id="SSF50677">
    <property type="entry name" value="ValRS/IleRS/LeuRS editing domain"/>
    <property type="match status" value="1"/>
</dbReference>
<dbReference type="PROSITE" id="PS00178">
    <property type="entry name" value="AA_TRNA_LIGASE_I"/>
    <property type="match status" value="1"/>
</dbReference>
<organism>
    <name type="scientific">Campylobacter lari (strain RM2100 / D67 / ATCC BAA-1060)</name>
    <dbReference type="NCBI Taxonomy" id="306263"/>
    <lineage>
        <taxon>Bacteria</taxon>
        <taxon>Pseudomonadati</taxon>
        <taxon>Campylobacterota</taxon>
        <taxon>Epsilonproteobacteria</taxon>
        <taxon>Campylobacterales</taxon>
        <taxon>Campylobacteraceae</taxon>
        <taxon>Campylobacter</taxon>
    </lineage>
</organism>
<evidence type="ECO:0000255" key="1">
    <source>
        <dbReference type="HAMAP-Rule" id="MF_00049"/>
    </source>
</evidence>
<reference key="1">
    <citation type="journal article" date="2008" name="Foodborne Pathog. Dis.">
        <title>The complete genome sequence and analysis of the human pathogen Campylobacter lari.</title>
        <authorList>
            <person name="Miller W.G."/>
            <person name="Wang G."/>
            <person name="Binnewies T.T."/>
            <person name="Parker C.T."/>
        </authorList>
    </citation>
    <scope>NUCLEOTIDE SEQUENCE [LARGE SCALE GENOMIC DNA]</scope>
    <source>
        <strain>RM2100 / D67 / ATCC BAA-1060</strain>
    </source>
</reference>
<gene>
    <name evidence="1" type="primary">leuS</name>
    <name type="ordered locus">Cla_1045</name>
</gene>
<keyword id="KW-0030">Aminoacyl-tRNA synthetase</keyword>
<keyword id="KW-0067">ATP-binding</keyword>
<keyword id="KW-0963">Cytoplasm</keyword>
<keyword id="KW-0436">Ligase</keyword>
<keyword id="KW-0547">Nucleotide-binding</keyword>
<keyword id="KW-0648">Protein biosynthesis</keyword>
<keyword id="KW-1185">Reference proteome</keyword>
<feature type="chain" id="PRO_1000199186" description="Leucine--tRNA ligase">
    <location>
        <begin position="1"/>
        <end position="809"/>
    </location>
</feature>
<feature type="short sequence motif" description="'HIGH' region">
    <location>
        <begin position="40"/>
        <end position="50"/>
    </location>
</feature>
<feature type="short sequence motif" description="'KMSKS' region">
    <location>
        <begin position="579"/>
        <end position="583"/>
    </location>
</feature>
<feature type="binding site" evidence="1">
    <location>
        <position position="582"/>
    </location>
    <ligand>
        <name>ATP</name>
        <dbReference type="ChEBI" id="CHEBI:30616"/>
    </ligand>
</feature>
<protein>
    <recommendedName>
        <fullName evidence="1">Leucine--tRNA ligase</fullName>
        <ecNumber evidence="1">6.1.1.4</ecNumber>
    </recommendedName>
    <alternativeName>
        <fullName evidence="1">Leucyl-tRNA synthetase</fullName>
        <shortName evidence="1">LeuRS</shortName>
    </alternativeName>
</protein>
<comment type="catalytic activity">
    <reaction evidence="1">
        <text>tRNA(Leu) + L-leucine + ATP = L-leucyl-tRNA(Leu) + AMP + diphosphate</text>
        <dbReference type="Rhea" id="RHEA:11688"/>
        <dbReference type="Rhea" id="RHEA-COMP:9613"/>
        <dbReference type="Rhea" id="RHEA-COMP:9622"/>
        <dbReference type="ChEBI" id="CHEBI:30616"/>
        <dbReference type="ChEBI" id="CHEBI:33019"/>
        <dbReference type="ChEBI" id="CHEBI:57427"/>
        <dbReference type="ChEBI" id="CHEBI:78442"/>
        <dbReference type="ChEBI" id="CHEBI:78494"/>
        <dbReference type="ChEBI" id="CHEBI:456215"/>
        <dbReference type="EC" id="6.1.1.4"/>
    </reaction>
</comment>
<comment type="subcellular location">
    <subcellularLocation>
        <location evidence="1">Cytoplasm</location>
    </subcellularLocation>
</comment>
<comment type="similarity">
    <text evidence="1">Belongs to the class-I aminoacyl-tRNA synthetase family.</text>
</comment>
<name>SYL_CAMLR</name>